<protein>
    <recommendedName>
        <fullName evidence="1">Pyridoxal 5'-phosphate synthase subunit PdxS</fullName>
        <shortName evidence="1">PLP synthase subunit PdxS</shortName>
        <ecNumber evidence="1">4.3.3.6</ecNumber>
    </recommendedName>
    <alternativeName>
        <fullName evidence="1">Pdx1</fullName>
    </alternativeName>
</protein>
<accession>Q8RBJ3</accession>
<reference key="1">
    <citation type="journal article" date="2002" name="Genome Res.">
        <title>A complete sequence of the T. tengcongensis genome.</title>
        <authorList>
            <person name="Bao Q."/>
            <person name="Tian Y."/>
            <person name="Li W."/>
            <person name="Xu Z."/>
            <person name="Xuan Z."/>
            <person name="Hu S."/>
            <person name="Dong W."/>
            <person name="Yang J."/>
            <person name="Chen Y."/>
            <person name="Xue Y."/>
            <person name="Xu Y."/>
            <person name="Lai X."/>
            <person name="Huang L."/>
            <person name="Dong X."/>
            <person name="Ma Y."/>
            <person name="Ling L."/>
            <person name="Tan H."/>
            <person name="Chen R."/>
            <person name="Wang J."/>
            <person name="Yu J."/>
            <person name="Yang H."/>
        </authorList>
    </citation>
    <scope>NUCLEOTIDE SEQUENCE [LARGE SCALE GENOMIC DNA]</scope>
    <source>
        <strain>DSM 15242 / JCM 11007 / NBRC 100824 / MB4</strain>
    </source>
</reference>
<keyword id="KW-0456">Lyase</keyword>
<keyword id="KW-0663">Pyridoxal phosphate</keyword>
<keyword id="KW-1185">Reference proteome</keyword>
<keyword id="KW-0704">Schiff base</keyword>
<dbReference type="EC" id="4.3.3.6" evidence="1"/>
<dbReference type="EMBL" id="AE008691">
    <property type="protein sequence ID" value="AAM24080.1"/>
    <property type="molecule type" value="Genomic_DNA"/>
</dbReference>
<dbReference type="RefSeq" id="WP_011025216.1">
    <property type="nucleotide sequence ID" value="NZ_JANUCV010000001.1"/>
</dbReference>
<dbReference type="SMR" id="Q8RBJ3"/>
<dbReference type="STRING" id="273068.TTE0823"/>
<dbReference type="KEGG" id="tte:TTE0823"/>
<dbReference type="eggNOG" id="COG0214">
    <property type="taxonomic scope" value="Bacteria"/>
</dbReference>
<dbReference type="HOGENOM" id="CLU_055352_1_0_9"/>
<dbReference type="OrthoDB" id="9772545at2"/>
<dbReference type="UniPathway" id="UPA00245"/>
<dbReference type="Proteomes" id="UP000000555">
    <property type="component" value="Chromosome"/>
</dbReference>
<dbReference type="GO" id="GO:0036381">
    <property type="term" value="F:pyridoxal 5'-phosphate synthase (glutamine hydrolysing) activity"/>
    <property type="evidence" value="ECO:0007669"/>
    <property type="project" value="UniProtKB-UniRule"/>
</dbReference>
<dbReference type="GO" id="GO:0006520">
    <property type="term" value="P:amino acid metabolic process"/>
    <property type="evidence" value="ECO:0007669"/>
    <property type="project" value="TreeGrafter"/>
</dbReference>
<dbReference type="GO" id="GO:0042823">
    <property type="term" value="P:pyridoxal phosphate biosynthetic process"/>
    <property type="evidence" value="ECO:0007669"/>
    <property type="project" value="UniProtKB-UniRule"/>
</dbReference>
<dbReference type="GO" id="GO:0008615">
    <property type="term" value="P:pyridoxine biosynthetic process"/>
    <property type="evidence" value="ECO:0007669"/>
    <property type="project" value="TreeGrafter"/>
</dbReference>
<dbReference type="CDD" id="cd04727">
    <property type="entry name" value="pdxS"/>
    <property type="match status" value="1"/>
</dbReference>
<dbReference type="FunFam" id="3.20.20.70:FF:000001">
    <property type="entry name" value="Pyridoxine biosynthesis protein PDX1"/>
    <property type="match status" value="1"/>
</dbReference>
<dbReference type="Gene3D" id="3.20.20.70">
    <property type="entry name" value="Aldolase class I"/>
    <property type="match status" value="1"/>
</dbReference>
<dbReference type="HAMAP" id="MF_01824">
    <property type="entry name" value="PdxS"/>
    <property type="match status" value="1"/>
</dbReference>
<dbReference type="InterPro" id="IPR013785">
    <property type="entry name" value="Aldolase_TIM"/>
</dbReference>
<dbReference type="InterPro" id="IPR001852">
    <property type="entry name" value="PdxS/SNZ"/>
</dbReference>
<dbReference type="InterPro" id="IPR033755">
    <property type="entry name" value="PdxS/SNZ_N"/>
</dbReference>
<dbReference type="InterPro" id="IPR011060">
    <property type="entry name" value="RibuloseP-bd_barrel"/>
</dbReference>
<dbReference type="NCBIfam" id="NF003215">
    <property type="entry name" value="PRK04180.1"/>
    <property type="match status" value="1"/>
</dbReference>
<dbReference type="NCBIfam" id="TIGR00343">
    <property type="entry name" value="pyridoxal 5'-phosphate synthase lyase subunit PdxS"/>
    <property type="match status" value="1"/>
</dbReference>
<dbReference type="PANTHER" id="PTHR31829">
    <property type="entry name" value="PYRIDOXAL 5'-PHOSPHATE SYNTHASE SUBUNIT SNZ1-RELATED"/>
    <property type="match status" value="1"/>
</dbReference>
<dbReference type="PANTHER" id="PTHR31829:SF0">
    <property type="entry name" value="PYRIDOXAL 5'-PHOSPHATE SYNTHASE SUBUNIT SNZ1-RELATED"/>
    <property type="match status" value="1"/>
</dbReference>
<dbReference type="Pfam" id="PF01680">
    <property type="entry name" value="SOR_SNZ"/>
    <property type="match status" value="1"/>
</dbReference>
<dbReference type="PIRSF" id="PIRSF029271">
    <property type="entry name" value="Pdx1"/>
    <property type="match status" value="1"/>
</dbReference>
<dbReference type="SUPFAM" id="SSF51366">
    <property type="entry name" value="Ribulose-phoshate binding barrel"/>
    <property type="match status" value="1"/>
</dbReference>
<dbReference type="PROSITE" id="PS01235">
    <property type="entry name" value="PDXS_SNZ_1"/>
    <property type="match status" value="1"/>
</dbReference>
<dbReference type="PROSITE" id="PS51129">
    <property type="entry name" value="PDXS_SNZ_2"/>
    <property type="match status" value="1"/>
</dbReference>
<evidence type="ECO:0000255" key="1">
    <source>
        <dbReference type="HAMAP-Rule" id="MF_01824"/>
    </source>
</evidence>
<sequence>MNERYELNKNLAQMLKGGVIMDVTTPEEAIIAEKAGAVAVMALERVPADIRARGGVARMSDPKIIKEIKAAVSIPVMAKVRIGHFVEAQILEALGIDFIDESEVLTPADEMYHINKWDFKVPFVCGAKNLGEALRRIAEGASMIRTKGEAGTGNVVEAVRHMRMINAEIKRLTTLGEEELMAAAKELQAPYDLVKYVAQHGKLPVVNFAAGGIATPADAALMMQLGADGVFVGSGIFKSQNPEKMAAAIVKAVTYYDKPEILAEVSEGLGEAMTGIDIRQLEEKDLYATRGW</sequence>
<organism>
    <name type="scientific">Caldanaerobacter subterraneus subsp. tengcongensis (strain DSM 15242 / JCM 11007 / NBRC 100824 / MB4)</name>
    <name type="common">Thermoanaerobacter tengcongensis</name>
    <dbReference type="NCBI Taxonomy" id="273068"/>
    <lineage>
        <taxon>Bacteria</taxon>
        <taxon>Bacillati</taxon>
        <taxon>Bacillota</taxon>
        <taxon>Clostridia</taxon>
        <taxon>Thermoanaerobacterales</taxon>
        <taxon>Thermoanaerobacteraceae</taxon>
        <taxon>Caldanaerobacter</taxon>
    </lineage>
</organism>
<gene>
    <name evidence="1" type="primary">pdxS</name>
    <name type="synonym">snz1</name>
    <name type="ordered locus">TTE0823</name>
</gene>
<proteinExistence type="inferred from homology"/>
<name>PDXS_CALS4</name>
<comment type="function">
    <text evidence="1">Catalyzes the formation of pyridoxal 5'-phosphate from ribose 5-phosphate (RBP), glyceraldehyde 3-phosphate (G3P) and ammonia. The ammonia is provided by the PdxT subunit. Can also use ribulose 5-phosphate and dihydroxyacetone phosphate as substrates, resulting from enzyme-catalyzed isomerization of RBP and G3P, respectively.</text>
</comment>
<comment type="catalytic activity">
    <reaction evidence="1">
        <text>aldehydo-D-ribose 5-phosphate + D-glyceraldehyde 3-phosphate + L-glutamine = pyridoxal 5'-phosphate + L-glutamate + phosphate + 3 H2O + H(+)</text>
        <dbReference type="Rhea" id="RHEA:31507"/>
        <dbReference type="ChEBI" id="CHEBI:15377"/>
        <dbReference type="ChEBI" id="CHEBI:15378"/>
        <dbReference type="ChEBI" id="CHEBI:29985"/>
        <dbReference type="ChEBI" id="CHEBI:43474"/>
        <dbReference type="ChEBI" id="CHEBI:58273"/>
        <dbReference type="ChEBI" id="CHEBI:58359"/>
        <dbReference type="ChEBI" id="CHEBI:59776"/>
        <dbReference type="ChEBI" id="CHEBI:597326"/>
        <dbReference type="EC" id="4.3.3.6"/>
    </reaction>
</comment>
<comment type="pathway">
    <text evidence="1">Cofactor biosynthesis; pyridoxal 5'-phosphate biosynthesis.</text>
</comment>
<comment type="subunit">
    <text evidence="1">In the presence of PdxT, forms a dodecamer of heterodimers.</text>
</comment>
<comment type="similarity">
    <text evidence="1">Belongs to the PdxS/SNZ family.</text>
</comment>
<feature type="chain" id="PRO_0000109426" description="Pyridoxal 5'-phosphate synthase subunit PdxS">
    <location>
        <begin position="1"/>
        <end position="292"/>
    </location>
</feature>
<feature type="active site" description="Schiff-base intermediate with D-ribose 5-phosphate" evidence="1">
    <location>
        <position position="79"/>
    </location>
</feature>
<feature type="binding site" evidence="1">
    <location>
        <position position="22"/>
    </location>
    <ligand>
        <name>D-ribose 5-phosphate</name>
        <dbReference type="ChEBI" id="CHEBI:78346"/>
    </ligand>
</feature>
<feature type="binding site" evidence="1">
    <location>
        <position position="151"/>
    </location>
    <ligand>
        <name>D-ribose 5-phosphate</name>
        <dbReference type="ChEBI" id="CHEBI:78346"/>
    </ligand>
</feature>
<feature type="binding site" evidence="1">
    <location>
        <position position="163"/>
    </location>
    <ligand>
        <name>D-glyceraldehyde 3-phosphate</name>
        <dbReference type="ChEBI" id="CHEBI:59776"/>
    </ligand>
</feature>
<feature type="binding site" evidence="1">
    <location>
        <position position="212"/>
    </location>
    <ligand>
        <name>D-ribose 5-phosphate</name>
        <dbReference type="ChEBI" id="CHEBI:78346"/>
    </ligand>
</feature>
<feature type="binding site" evidence="1">
    <location>
        <begin position="233"/>
        <end position="234"/>
    </location>
    <ligand>
        <name>D-ribose 5-phosphate</name>
        <dbReference type="ChEBI" id="CHEBI:78346"/>
    </ligand>
</feature>